<keyword id="KW-0963">Cytoplasm</keyword>
<keyword id="KW-0274">FAD</keyword>
<keyword id="KW-0285">Flavoprotein</keyword>
<keyword id="KW-0288">FMN</keyword>
<keyword id="KW-0496">Mitochondrion</keyword>
<keyword id="KW-0521">NADP</keyword>
<keyword id="KW-0560">Oxidoreductase</keyword>
<keyword id="KW-1185">Reference proteome</keyword>
<feature type="chain" id="PRO_0000167613" description="NADPH-dependent diflavin oxidoreductase 1">
    <location>
        <begin position="1"/>
        <end position="654"/>
    </location>
</feature>
<feature type="domain" description="Flavodoxin-like" evidence="1">
    <location>
        <begin position="14"/>
        <end position="166"/>
    </location>
</feature>
<feature type="domain" description="FAD-binding FR-type" evidence="1">
    <location>
        <begin position="235"/>
        <end position="485"/>
    </location>
</feature>
<feature type="binding site" evidence="1">
    <location>
        <begin position="20"/>
        <end position="25"/>
    </location>
    <ligand>
        <name>FMN</name>
        <dbReference type="ChEBI" id="CHEBI:58210"/>
    </ligand>
</feature>
<feature type="binding site" evidence="1">
    <location>
        <begin position="75"/>
        <end position="78"/>
    </location>
    <ligand>
        <name>FMN</name>
        <dbReference type="ChEBI" id="CHEBI:58210"/>
    </ligand>
</feature>
<feature type="binding site" evidence="1">
    <location>
        <begin position="113"/>
        <end position="122"/>
    </location>
    <ligand>
        <name>FMN</name>
        <dbReference type="ChEBI" id="CHEBI:58210"/>
    </ligand>
</feature>
<feature type="binding site" evidence="1">
    <location>
        <position position="389"/>
    </location>
    <ligand>
        <name>FAD</name>
        <dbReference type="ChEBI" id="CHEBI:57692"/>
    </ligand>
</feature>
<feature type="binding site" evidence="1">
    <location>
        <begin position="419"/>
        <end position="422"/>
    </location>
    <ligand>
        <name>FAD</name>
        <dbReference type="ChEBI" id="CHEBI:57692"/>
    </ligand>
</feature>
<feature type="binding site" evidence="1">
    <location>
        <begin position="458"/>
        <end position="461"/>
    </location>
    <ligand>
        <name>FAD</name>
        <dbReference type="ChEBI" id="CHEBI:57692"/>
    </ligand>
</feature>
<feature type="binding site" evidence="1">
    <location>
        <position position="500"/>
    </location>
    <ligand>
        <name>NADP(+)</name>
        <dbReference type="ChEBI" id="CHEBI:58349"/>
    </ligand>
</feature>
<feature type="binding site" evidence="1">
    <location>
        <begin position="568"/>
        <end position="569"/>
    </location>
    <ligand>
        <name>NADP(+)</name>
        <dbReference type="ChEBI" id="CHEBI:58349"/>
    </ligand>
</feature>
<feature type="binding site" evidence="1">
    <location>
        <begin position="574"/>
        <end position="578"/>
    </location>
    <ligand>
        <name>NADP(+)</name>
        <dbReference type="ChEBI" id="CHEBI:58349"/>
    </ligand>
</feature>
<feature type="binding site" evidence="1">
    <location>
        <position position="654"/>
    </location>
    <ligand>
        <name>FAD</name>
        <dbReference type="ChEBI" id="CHEBI:57692"/>
    </ligand>
</feature>
<dbReference type="EC" id="1.18.1.-" evidence="1"/>
<dbReference type="EMBL" id="AAHF01000003">
    <property type="protein sequence ID" value="EAL91867.1"/>
    <property type="molecule type" value="Genomic_DNA"/>
</dbReference>
<dbReference type="RefSeq" id="XP_753905.1">
    <property type="nucleotide sequence ID" value="XM_748812.1"/>
</dbReference>
<dbReference type="SMR" id="Q4WU59"/>
<dbReference type="FunCoup" id="Q4WU59">
    <property type="interactions" value="746"/>
</dbReference>
<dbReference type="STRING" id="330879.Q4WU59"/>
<dbReference type="EnsemblFungi" id="EAL91867">
    <property type="protein sequence ID" value="EAL91867"/>
    <property type="gene ID" value="AFUA_5G07290"/>
</dbReference>
<dbReference type="GeneID" id="3511369"/>
<dbReference type="KEGG" id="afm:AFUA_5G07290"/>
<dbReference type="VEuPathDB" id="FungiDB:Afu5g07290"/>
<dbReference type="eggNOG" id="KOG1159">
    <property type="taxonomic scope" value="Eukaryota"/>
</dbReference>
<dbReference type="HOGENOM" id="CLU_001570_17_6_1"/>
<dbReference type="InParanoid" id="Q4WU59"/>
<dbReference type="OMA" id="DIMSIPR"/>
<dbReference type="OrthoDB" id="1856718at2759"/>
<dbReference type="Proteomes" id="UP000002530">
    <property type="component" value="Chromosome 5"/>
</dbReference>
<dbReference type="GO" id="GO:0005829">
    <property type="term" value="C:cytosol"/>
    <property type="evidence" value="ECO:0000318"/>
    <property type="project" value="GO_Central"/>
</dbReference>
<dbReference type="GO" id="GO:0097361">
    <property type="term" value="C:cytosolic [4Fe-4S] assembly targeting complex"/>
    <property type="evidence" value="ECO:0007669"/>
    <property type="project" value="EnsemblFungi"/>
</dbReference>
<dbReference type="GO" id="GO:0005739">
    <property type="term" value="C:mitochondrion"/>
    <property type="evidence" value="ECO:0007669"/>
    <property type="project" value="UniProtKB-SubCell"/>
</dbReference>
<dbReference type="GO" id="GO:0050660">
    <property type="term" value="F:flavin adenine dinucleotide binding"/>
    <property type="evidence" value="ECO:0000318"/>
    <property type="project" value="GO_Central"/>
</dbReference>
<dbReference type="GO" id="GO:0010181">
    <property type="term" value="F:FMN binding"/>
    <property type="evidence" value="ECO:0000318"/>
    <property type="project" value="GO_Central"/>
</dbReference>
<dbReference type="GO" id="GO:0050661">
    <property type="term" value="F:NADP binding"/>
    <property type="evidence" value="ECO:0007669"/>
    <property type="project" value="UniProtKB-UniRule"/>
</dbReference>
<dbReference type="GO" id="GO:0003958">
    <property type="term" value="F:NADPH-hemoprotein reductase activity"/>
    <property type="evidence" value="ECO:0007669"/>
    <property type="project" value="InterPro"/>
</dbReference>
<dbReference type="GO" id="GO:0016491">
    <property type="term" value="F:oxidoreductase activity"/>
    <property type="evidence" value="ECO:0000318"/>
    <property type="project" value="GO_Central"/>
</dbReference>
<dbReference type="GO" id="GO:0034599">
    <property type="term" value="P:cellular response to oxidative stress"/>
    <property type="evidence" value="ECO:0007669"/>
    <property type="project" value="EnsemblFungi"/>
</dbReference>
<dbReference type="GO" id="GO:0016226">
    <property type="term" value="P:iron-sulfur cluster assembly"/>
    <property type="evidence" value="ECO:0007669"/>
    <property type="project" value="UniProtKB-UniRule"/>
</dbReference>
<dbReference type="GO" id="GO:0006809">
    <property type="term" value="P:nitric oxide biosynthetic process"/>
    <property type="evidence" value="ECO:0007669"/>
    <property type="project" value="EnsemblFungi"/>
</dbReference>
<dbReference type="GO" id="GO:0045429">
    <property type="term" value="P:positive regulation of nitric oxide biosynthetic process"/>
    <property type="evidence" value="ECO:0007669"/>
    <property type="project" value="EnsemblFungi"/>
</dbReference>
<dbReference type="FunFam" id="1.20.990.10:FF:000013">
    <property type="entry name" value="NADPH-dependent diflavin oxidoreductase 1"/>
    <property type="match status" value="1"/>
</dbReference>
<dbReference type="FunFam" id="3.40.50.360:FF:000015">
    <property type="entry name" value="NADPH-dependent diflavin oxidoreductase 1"/>
    <property type="match status" value="1"/>
</dbReference>
<dbReference type="FunFam" id="3.40.50.80:FF:000030">
    <property type="entry name" value="NADPH-dependent diflavin oxidoreductase 1"/>
    <property type="match status" value="1"/>
</dbReference>
<dbReference type="Gene3D" id="3.40.50.360">
    <property type="match status" value="1"/>
</dbReference>
<dbReference type="Gene3D" id="1.20.990.10">
    <property type="entry name" value="NADPH-cytochrome p450 Reductase, Chain A, domain 3"/>
    <property type="match status" value="1"/>
</dbReference>
<dbReference type="Gene3D" id="3.40.50.80">
    <property type="entry name" value="Nucleotide-binding domain of ferredoxin-NADP reductase (FNR) module"/>
    <property type="match status" value="1"/>
</dbReference>
<dbReference type="Gene3D" id="2.40.30.10">
    <property type="entry name" value="Translation factors"/>
    <property type="match status" value="1"/>
</dbReference>
<dbReference type="HAMAP" id="MF_03178">
    <property type="entry name" value="NDOR1"/>
    <property type="match status" value="1"/>
</dbReference>
<dbReference type="InterPro" id="IPR003097">
    <property type="entry name" value="CysJ-like_FAD-binding"/>
</dbReference>
<dbReference type="InterPro" id="IPR017927">
    <property type="entry name" value="FAD-bd_FR_type"/>
</dbReference>
<dbReference type="InterPro" id="IPR001094">
    <property type="entry name" value="Flavdoxin-like"/>
</dbReference>
<dbReference type="InterPro" id="IPR008254">
    <property type="entry name" value="Flavodoxin/NO_synth"/>
</dbReference>
<dbReference type="InterPro" id="IPR001709">
    <property type="entry name" value="Flavoprot_Pyr_Nucl_cyt_Rdtase"/>
</dbReference>
<dbReference type="InterPro" id="IPR029039">
    <property type="entry name" value="Flavoprotein-like_sf"/>
</dbReference>
<dbReference type="InterPro" id="IPR039261">
    <property type="entry name" value="FNR_nucleotide-bd"/>
</dbReference>
<dbReference type="InterPro" id="IPR023173">
    <property type="entry name" value="NADPH_Cyt_P450_Rdtase_alpha"/>
</dbReference>
<dbReference type="InterPro" id="IPR028879">
    <property type="entry name" value="NDOR1"/>
</dbReference>
<dbReference type="InterPro" id="IPR001433">
    <property type="entry name" value="OxRdtase_FAD/NAD-bd"/>
</dbReference>
<dbReference type="InterPro" id="IPR017938">
    <property type="entry name" value="Riboflavin_synthase-like_b-brl"/>
</dbReference>
<dbReference type="PANTHER" id="PTHR19384:SF10">
    <property type="entry name" value="NADPH-DEPENDENT DIFLAVIN OXIDOREDUCTASE 1"/>
    <property type="match status" value="1"/>
</dbReference>
<dbReference type="PANTHER" id="PTHR19384">
    <property type="entry name" value="NITRIC OXIDE SYNTHASE-RELATED"/>
    <property type="match status" value="1"/>
</dbReference>
<dbReference type="Pfam" id="PF00667">
    <property type="entry name" value="FAD_binding_1"/>
    <property type="match status" value="1"/>
</dbReference>
<dbReference type="Pfam" id="PF00258">
    <property type="entry name" value="Flavodoxin_1"/>
    <property type="match status" value="1"/>
</dbReference>
<dbReference type="Pfam" id="PF00175">
    <property type="entry name" value="NAD_binding_1"/>
    <property type="match status" value="1"/>
</dbReference>
<dbReference type="PRINTS" id="PR00369">
    <property type="entry name" value="FLAVODOXIN"/>
</dbReference>
<dbReference type="PRINTS" id="PR00371">
    <property type="entry name" value="FPNCR"/>
</dbReference>
<dbReference type="SUPFAM" id="SSF52343">
    <property type="entry name" value="Ferredoxin reductase-like, C-terminal NADP-linked domain"/>
    <property type="match status" value="1"/>
</dbReference>
<dbReference type="SUPFAM" id="SSF52218">
    <property type="entry name" value="Flavoproteins"/>
    <property type="match status" value="1"/>
</dbReference>
<dbReference type="SUPFAM" id="SSF63380">
    <property type="entry name" value="Riboflavin synthase domain-like"/>
    <property type="match status" value="1"/>
</dbReference>
<dbReference type="PROSITE" id="PS51384">
    <property type="entry name" value="FAD_FR"/>
    <property type="match status" value="1"/>
</dbReference>
<dbReference type="PROSITE" id="PS50902">
    <property type="entry name" value="FLAVODOXIN_LIKE"/>
    <property type="match status" value="1"/>
</dbReference>
<gene>
    <name evidence="1" type="primary">tah18</name>
    <name type="ORF">AFUA_5G07290</name>
</gene>
<protein>
    <recommendedName>
        <fullName evidence="1">NADPH-dependent diflavin oxidoreductase 1</fullName>
        <ecNumber evidence="1">1.18.1.-</ecNumber>
    </recommendedName>
    <alternativeName>
        <fullName evidence="1">NADPH-dependent FMN and FAD-containing oxidoreductase</fullName>
    </alternativeName>
</protein>
<reference key="1">
    <citation type="journal article" date="2005" name="Nature">
        <title>Genomic sequence of the pathogenic and allergenic filamentous fungus Aspergillus fumigatus.</title>
        <authorList>
            <person name="Nierman W.C."/>
            <person name="Pain A."/>
            <person name="Anderson M.J."/>
            <person name="Wortman J.R."/>
            <person name="Kim H.S."/>
            <person name="Arroyo J."/>
            <person name="Berriman M."/>
            <person name="Abe K."/>
            <person name="Archer D.B."/>
            <person name="Bermejo C."/>
            <person name="Bennett J.W."/>
            <person name="Bowyer P."/>
            <person name="Chen D."/>
            <person name="Collins M."/>
            <person name="Coulsen R."/>
            <person name="Davies R."/>
            <person name="Dyer P.S."/>
            <person name="Farman M.L."/>
            <person name="Fedorova N."/>
            <person name="Fedorova N.D."/>
            <person name="Feldblyum T.V."/>
            <person name="Fischer R."/>
            <person name="Fosker N."/>
            <person name="Fraser A."/>
            <person name="Garcia J.L."/>
            <person name="Garcia M.J."/>
            <person name="Goble A."/>
            <person name="Goldman G.H."/>
            <person name="Gomi K."/>
            <person name="Griffith-Jones S."/>
            <person name="Gwilliam R."/>
            <person name="Haas B.J."/>
            <person name="Haas H."/>
            <person name="Harris D.E."/>
            <person name="Horiuchi H."/>
            <person name="Huang J."/>
            <person name="Humphray S."/>
            <person name="Jimenez J."/>
            <person name="Keller N."/>
            <person name="Khouri H."/>
            <person name="Kitamoto K."/>
            <person name="Kobayashi T."/>
            <person name="Konzack S."/>
            <person name="Kulkarni R."/>
            <person name="Kumagai T."/>
            <person name="Lafton A."/>
            <person name="Latge J.-P."/>
            <person name="Li W."/>
            <person name="Lord A."/>
            <person name="Lu C."/>
            <person name="Majoros W.H."/>
            <person name="May G.S."/>
            <person name="Miller B.L."/>
            <person name="Mohamoud Y."/>
            <person name="Molina M."/>
            <person name="Monod M."/>
            <person name="Mouyna I."/>
            <person name="Mulligan S."/>
            <person name="Murphy L.D."/>
            <person name="O'Neil S."/>
            <person name="Paulsen I."/>
            <person name="Penalva M.A."/>
            <person name="Pertea M."/>
            <person name="Price C."/>
            <person name="Pritchard B.L."/>
            <person name="Quail M.A."/>
            <person name="Rabbinowitsch E."/>
            <person name="Rawlins N."/>
            <person name="Rajandream M.A."/>
            <person name="Reichard U."/>
            <person name="Renauld H."/>
            <person name="Robson G.D."/>
            <person name="Rodriguez de Cordoba S."/>
            <person name="Rodriguez-Pena J.M."/>
            <person name="Ronning C.M."/>
            <person name="Rutter S."/>
            <person name="Salzberg S.L."/>
            <person name="Sanchez M."/>
            <person name="Sanchez-Ferrero J.C."/>
            <person name="Saunders D."/>
            <person name="Seeger K."/>
            <person name="Squares R."/>
            <person name="Squares S."/>
            <person name="Takeuchi M."/>
            <person name="Tekaia F."/>
            <person name="Turner G."/>
            <person name="Vazquez de Aldana C.R."/>
            <person name="Weidman J."/>
            <person name="White O."/>
            <person name="Woodward J.R."/>
            <person name="Yu J.-H."/>
            <person name="Fraser C.M."/>
            <person name="Galagan J.E."/>
            <person name="Asai K."/>
            <person name="Machida M."/>
            <person name="Hall N."/>
            <person name="Barrell B.G."/>
            <person name="Denning D.W."/>
        </authorList>
    </citation>
    <scope>NUCLEOTIDE SEQUENCE [LARGE SCALE GENOMIC DNA]</scope>
    <source>
        <strain>ATCC MYA-4609 / CBS 101355 / FGSC A1100 / Af293</strain>
    </source>
</reference>
<proteinExistence type="inferred from homology"/>
<sequence>MSESPAQEARTRTALVLYGSETGNAQEVAEELGALAERLHFVTHVAEMNSVKATLLTILPQEMLRSFTFTIFVVSTTGQGEIPANARSFWRSLLLKKLPPTFLSGVNYVSFGLGDSSYPKFNWAARKLHKRLLQLGANEIYPRGEANAQHPEGLEGTFIPWITDFRSHLLDKYPLPEGLHPIPDDEQLPPKWVLRLQEPATTGDELTEGTLSSEQTVSDEYPGLTRLDHDVRPIPDALTATLVENRRVTPRTHWQDVRQISLTVPDAVTYAPGDMICITPKNFDEDVQALIDMMGWGEMADKLVSLAPGEKLQAAGELHAPPIPGLEKYPKLTLRALLMDYIDIRAIPRRSFFSAIAHYTSNEMHKERLLEFTNPEYLDEFWDYTSRPRRSILEVLHEFHSVKIPWQHVTTVFPVFRGRQFSIASGGELKRTSGGGAKFELLIAIVKYQTVIKRIREGVCTRYLSVLRPGSTLKVQLQRGGLSSSVNQLVGPTVLIGPGTGVAPLRSMLWEKAAFVKAYREEHPDANPPIGPTILLYGGRNRAADFFFEEEWQELSDLIGLQVFTAFSRDQRHKIYVQDIIRRNFGLFFRLLHDMNGSVYICGSSGRMPQAVREALIEAFEHGGQADGPQLARRGAEEYLIGMEKSGRYKQETW</sequence>
<evidence type="ECO:0000255" key="1">
    <source>
        <dbReference type="HAMAP-Rule" id="MF_03178"/>
    </source>
</evidence>
<organism>
    <name type="scientific">Aspergillus fumigatus (strain ATCC MYA-4609 / CBS 101355 / FGSC A1100 / Af293)</name>
    <name type="common">Neosartorya fumigata</name>
    <dbReference type="NCBI Taxonomy" id="330879"/>
    <lineage>
        <taxon>Eukaryota</taxon>
        <taxon>Fungi</taxon>
        <taxon>Dikarya</taxon>
        <taxon>Ascomycota</taxon>
        <taxon>Pezizomycotina</taxon>
        <taxon>Eurotiomycetes</taxon>
        <taxon>Eurotiomycetidae</taxon>
        <taxon>Eurotiales</taxon>
        <taxon>Aspergillaceae</taxon>
        <taxon>Aspergillus</taxon>
        <taxon>Aspergillus subgen. Fumigati</taxon>
    </lineage>
</organism>
<name>NDOR1_ASPFU</name>
<accession>Q4WU59</accession>
<comment type="function">
    <text evidence="1">NADPH-dependent reductase which is a central component of the cytosolic iron-sulfur (Fe-S) protein assembly (CIA) machinery. Transfers electrons from NADPH via its FAD and FMN prosthetic groups to the [2Fe-2S] cluster of dre2, another key component of the CIA machinery. In turn, this reduced cluster provides electrons for assembly of cytosolic iron-sulfur cluster proteins. Positively controls H(2)O(2)-induced cell death.</text>
</comment>
<comment type="catalytic activity">
    <reaction evidence="1">
        <text>2 oxidized [2Fe-2S]-[protein] + NADPH = 2 reduced [2Fe-2S]-[protein] + NADP(+) + H(+)</text>
        <dbReference type="Rhea" id="RHEA:67716"/>
        <dbReference type="Rhea" id="RHEA-COMP:17327"/>
        <dbReference type="Rhea" id="RHEA-COMP:17328"/>
        <dbReference type="ChEBI" id="CHEBI:15378"/>
        <dbReference type="ChEBI" id="CHEBI:33737"/>
        <dbReference type="ChEBI" id="CHEBI:33738"/>
        <dbReference type="ChEBI" id="CHEBI:57783"/>
        <dbReference type="ChEBI" id="CHEBI:58349"/>
    </reaction>
    <physiologicalReaction direction="left-to-right" evidence="1">
        <dbReference type="Rhea" id="RHEA:67717"/>
    </physiologicalReaction>
</comment>
<comment type="cofactor">
    <cofactor evidence="1">
        <name>FAD</name>
        <dbReference type="ChEBI" id="CHEBI:57692"/>
    </cofactor>
</comment>
<comment type="cofactor">
    <cofactor evidence="1">
        <name>FMN</name>
        <dbReference type="ChEBI" id="CHEBI:58210"/>
    </cofactor>
</comment>
<comment type="subunit">
    <text evidence="1">Interacts with dre2; as part of the cytosolic iron-sulfur (Fe-S) protein assembly (CIA) machinery.</text>
</comment>
<comment type="subcellular location">
    <subcellularLocation>
        <location evidence="1">Cytoplasm</location>
    </subcellularLocation>
    <subcellularLocation>
        <location evidence="1">Mitochondrion</location>
    </subcellularLocation>
    <text evidence="1">Relocalizes to mitochondria after H(2)O(2) exposure.</text>
</comment>
<comment type="similarity">
    <text evidence="1">Belongs to the NADPH-dependent diflavin oxidoreductase NDOR1 family.</text>
</comment>
<comment type="similarity">
    <text evidence="1">In the N-terminal section; belongs to the flavodoxin family.</text>
</comment>
<comment type="similarity">
    <text evidence="1">In the C-terminal section; belongs to the flavoprotein pyridine nucleotide cytochrome reductase family.</text>
</comment>